<sequence length="320" mass="36077">MTTNYSEPDPLVCDETYSSSIEILKYLLTISYLIPGGILHLFILHTILVTRRGYFKGSSFFAIFALDSVSSIIIVFIDSFYGRLFLYVPPLCPIVGPFFWASSLIPKIYFYLSVHTRLSKCVAHICMVLNRMTCVLMPTYYGQIWRKLTKVSLVIICILPLGGTWNIIISPRFYVLPSYGGFAISYVRAIPWASSSLFQSIYILTALVFTFICTSVTLYKLISLSDRIKSAEKSLCFSNIYISLTFLAAAASQALYAFCTSCMSSDLLFTAQFLAFDMFTVGSAVILFWSNSQIRGLILPSKAEDDRIFRVQTINNSFTH</sequence>
<evidence type="ECO:0000255" key="1"/>
<evidence type="ECO:0000305" key="2"/>
<organism>
    <name type="scientific">Caenorhabditis elegans</name>
    <dbReference type="NCBI Taxonomy" id="6239"/>
    <lineage>
        <taxon>Eukaryota</taxon>
        <taxon>Metazoa</taxon>
        <taxon>Ecdysozoa</taxon>
        <taxon>Nematoda</taxon>
        <taxon>Chromadorea</taxon>
        <taxon>Rhabditida</taxon>
        <taxon>Rhabditina</taxon>
        <taxon>Rhabditomorpha</taxon>
        <taxon>Rhabditoidea</taxon>
        <taxon>Rhabditidae</taxon>
        <taxon>Peloderinae</taxon>
        <taxon>Caenorhabditis</taxon>
    </lineage>
</organism>
<dbReference type="EMBL" id="Z66494">
    <property type="protein sequence ID" value="CAA91262.2"/>
    <property type="molecule type" value="Genomic_DNA"/>
</dbReference>
<dbReference type="PIR" id="T19710">
    <property type="entry name" value="T19710"/>
</dbReference>
<dbReference type="RefSeq" id="NP_495851.2">
    <property type="nucleotide sequence ID" value="NM_063450.2"/>
</dbReference>
<dbReference type="SMR" id="Q18428"/>
<dbReference type="STRING" id="6239.C34C6.1.1"/>
<dbReference type="PaxDb" id="6239-C34C6.1"/>
<dbReference type="EnsemblMetazoa" id="C34C6.1.1">
    <property type="protein sequence ID" value="C34C6.1.1"/>
    <property type="gene ID" value="WBGene00005172"/>
</dbReference>
<dbReference type="GeneID" id="183195"/>
<dbReference type="KEGG" id="cel:CELE_C34C6.1"/>
<dbReference type="UCSC" id="C34C6.1">
    <property type="organism name" value="c. elegans"/>
</dbReference>
<dbReference type="AGR" id="WB:WBGene00005172"/>
<dbReference type="CTD" id="183195"/>
<dbReference type="WormBase" id="C34C6.1">
    <property type="protein sequence ID" value="CE33033"/>
    <property type="gene ID" value="WBGene00005172"/>
    <property type="gene designation" value="srg-15"/>
</dbReference>
<dbReference type="eggNOG" id="ENOG502TJGE">
    <property type="taxonomic scope" value="Eukaryota"/>
</dbReference>
<dbReference type="GeneTree" id="ENSGT00970000195841"/>
<dbReference type="HOGENOM" id="CLU_061253_1_0_1"/>
<dbReference type="InParanoid" id="Q18428"/>
<dbReference type="OMA" id="IVGPYFW"/>
<dbReference type="OrthoDB" id="5871702at2759"/>
<dbReference type="PhylomeDB" id="Q18428"/>
<dbReference type="PRO" id="PR:Q18428"/>
<dbReference type="Proteomes" id="UP000001940">
    <property type="component" value="Chromosome II"/>
</dbReference>
<dbReference type="Bgee" id="WBGene00005172">
    <property type="expression patterns" value="Expressed in larva and 1 other cell type or tissue"/>
</dbReference>
<dbReference type="GO" id="GO:0016020">
    <property type="term" value="C:membrane"/>
    <property type="evidence" value="ECO:0007669"/>
    <property type="project" value="UniProtKB-SubCell"/>
</dbReference>
<dbReference type="GO" id="GO:0004888">
    <property type="term" value="F:transmembrane signaling receptor activity"/>
    <property type="evidence" value="ECO:0007669"/>
    <property type="project" value="InterPro"/>
</dbReference>
<dbReference type="GO" id="GO:0007606">
    <property type="term" value="P:sensory perception of chemical stimulus"/>
    <property type="evidence" value="ECO:0007669"/>
    <property type="project" value="InterPro"/>
</dbReference>
<dbReference type="InterPro" id="IPR000609">
    <property type="entry name" value="7TM_GPCR_serpentine_rcpt_Srg"/>
</dbReference>
<dbReference type="InterPro" id="IPR051119">
    <property type="entry name" value="Nematode_SR-like"/>
</dbReference>
<dbReference type="PANTHER" id="PTHR31627:SF43">
    <property type="entry name" value="SERPENTINE RECEPTOR CLASS GAMMA-15"/>
    <property type="match status" value="1"/>
</dbReference>
<dbReference type="PANTHER" id="PTHR31627">
    <property type="entry name" value="SERPENTINE RECEPTOR CLASS GAMMA-RELATED"/>
    <property type="match status" value="1"/>
</dbReference>
<dbReference type="Pfam" id="PF02118">
    <property type="entry name" value="Srg"/>
    <property type="match status" value="1"/>
</dbReference>
<dbReference type="PRINTS" id="PR00698">
    <property type="entry name" value="TMPROTEINSRG"/>
</dbReference>
<gene>
    <name type="primary">srg-15</name>
    <name type="ORF">C34C6.1</name>
</gene>
<feature type="chain" id="PRO_0000104564" description="Serpentine receptor class gamma-15">
    <location>
        <begin position="1"/>
        <end position="320"/>
    </location>
</feature>
<feature type="transmembrane region" description="Helical" evidence="1">
    <location>
        <begin position="29"/>
        <end position="49"/>
    </location>
</feature>
<feature type="transmembrane region" description="Helical" evidence="1">
    <location>
        <begin position="57"/>
        <end position="77"/>
    </location>
</feature>
<feature type="transmembrane region" description="Helical" evidence="1">
    <location>
        <begin position="85"/>
        <end position="105"/>
    </location>
</feature>
<feature type="transmembrane region" description="Helical" evidence="1">
    <location>
        <begin position="151"/>
        <end position="171"/>
    </location>
</feature>
<feature type="transmembrane region" description="Helical" evidence="1">
    <location>
        <begin position="197"/>
        <end position="217"/>
    </location>
</feature>
<feature type="transmembrane region" description="Helical" evidence="1">
    <location>
        <begin position="240"/>
        <end position="260"/>
    </location>
</feature>
<feature type="transmembrane region" description="Helical" evidence="1">
    <location>
        <begin position="268"/>
        <end position="288"/>
    </location>
</feature>
<proteinExistence type="inferred from homology"/>
<name>SRG15_CAEEL</name>
<reference key="1">
    <citation type="journal article" date="1998" name="Science">
        <title>Genome sequence of the nematode C. elegans: a platform for investigating biology.</title>
        <authorList>
            <consortium name="The C. elegans sequencing consortium"/>
        </authorList>
    </citation>
    <scope>NUCLEOTIDE SEQUENCE [LARGE SCALE GENOMIC DNA]</scope>
    <source>
        <strain>Bristol N2</strain>
    </source>
</reference>
<accession>Q18428</accession>
<comment type="subcellular location">
    <subcellularLocation>
        <location evidence="2">Membrane</location>
        <topology evidence="2">Multi-pass membrane protein</topology>
    </subcellularLocation>
</comment>
<comment type="similarity">
    <text evidence="2">Belongs to the nematode receptor-like protein srg family.</text>
</comment>
<protein>
    <recommendedName>
        <fullName>Serpentine receptor class gamma-15</fullName>
        <shortName>Protein srg-15</shortName>
    </recommendedName>
</protein>
<keyword id="KW-0472">Membrane</keyword>
<keyword id="KW-1185">Reference proteome</keyword>
<keyword id="KW-0812">Transmembrane</keyword>
<keyword id="KW-1133">Transmembrane helix</keyword>